<evidence type="ECO:0000256" key="1">
    <source>
        <dbReference type="SAM" id="MobiDB-lite"/>
    </source>
</evidence>
<protein>
    <recommendedName>
        <fullName>Putative uncharacterized protein DDB_G0275317</fullName>
    </recommendedName>
</protein>
<name>Y7642_DICDI</name>
<reference key="1">
    <citation type="journal article" date="2002" name="Nature">
        <title>Sequence and analysis of chromosome 2 of Dictyostelium discoideum.</title>
        <authorList>
            <person name="Gloeckner G."/>
            <person name="Eichinger L."/>
            <person name="Szafranski K."/>
            <person name="Pachebat J.A."/>
            <person name="Bankier A.T."/>
            <person name="Dear P.H."/>
            <person name="Lehmann R."/>
            <person name="Baumgart C."/>
            <person name="Parra G."/>
            <person name="Abril J.F."/>
            <person name="Guigo R."/>
            <person name="Kumpf K."/>
            <person name="Tunggal B."/>
            <person name="Cox E.C."/>
            <person name="Quail M.A."/>
            <person name="Platzer M."/>
            <person name="Rosenthal A."/>
            <person name="Noegel A.A."/>
        </authorList>
    </citation>
    <scope>NUCLEOTIDE SEQUENCE [LARGE SCALE GENOMIC DNA]</scope>
    <source>
        <strain>AX4</strain>
    </source>
</reference>
<reference key="2">
    <citation type="journal article" date="2005" name="Nature">
        <title>The genome of the social amoeba Dictyostelium discoideum.</title>
        <authorList>
            <person name="Eichinger L."/>
            <person name="Pachebat J.A."/>
            <person name="Gloeckner G."/>
            <person name="Rajandream M.A."/>
            <person name="Sucgang R."/>
            <person name="Berriman M."/>
            <person name="Song J."/>
            <person name="Olsen R."/>
            <person name="Szafranski K."/>
            <person name="Xu Q."/>
            <person name="Tunggal B."/>
            <person name="Kummerfeld S."/>
            <person name="Madera M."/>
            <person name="Konfortov B.A."/>
            <person name="Rivero F."/>
            <person name="Bankier A.T."/>
            <person name="Lehmann R."/>
            <person name="Hamlin N."/>
            <person name="Davies R."/>
            <person name="Gaudet P."/>
            <person name="Fey P."/>
            <person name="Pilcher K."/>
            <person name="Chen G."/>
            <person name="Saunders D."/>
            <person name="Sodergren E.J."/>
            <person name="Davis P."/>
            <person name="Kerhornou A."/>
            <person name="Nie X."/>
            <person name="Hall N."/>
            <person name="Anjard C."/>
            <person name="Hemphill L."/>
            <person name="Bason N."/>
            <person name="Farbrother P."/>
            <person name="Desany B."/>
            <person name="Just E."/>
            <person name="Morio T."/>
            <person name="Rost R."/>
            <person name="Churcher C.M."/>
            <person name="Cooper J."/>
            <person name="Haydock S."/>
            <person name="van Driessche N."/>
            <person name="Cronin A."/>
            <person name="Goodhead I."/>
            <person name="Muzny D.M."/>
            <person name="Mourier T."/>
            <person name="Pain A."/>
            <person name="Lu M."/>
            <person name="Harper D."/>
            <person name="Lindsay R."/>
            <person name="Hauser H."/>
            <person name="James K.D."/>
            <person name="Quiles M."/>
            <person name="Madan Babu M."/>
            <person name="Saito T."/>
            <person name="Buchrieser C."/>
            <person name="Wardroper A."/>
            <person name="Felder M."/>
            <person name="Thangavelu M."/>
            <person name="Johnson D."/>
            <person name="Knights A."/>
            <person name="Loulseged H."/>
            <person name="Mungall K.L."/>
            <person name="Oliver K."/>
            <person name="Price C."/>
            <person name="Quail M.A."/>
            <person name="Urushihara H."/>
            <person name="Hernandez J."/>
            <person name="Rabbinowitsch E."/>
            <person name="Steffen D."/>
            <person name="Sanders M."/>
            <person name="Ma J."/>
            <person name="Kohara Y."/>
            <person name="Sharp S."/>
            <person name="Simmonds M.N."/>
            <person name="Spiegler S."/>
            <person name="Tivey A."/>
            <person name="Sugano S."/>
            <person name="White B."/>
            <person name="Walker D."/>
            <person name="Woodward J.R."/>
            <person name="Winckler T."/>
            <person name="Tanaka Y."/>
            <person name="Shaulsky G."/>
            <person name="Schleicher M."/>
            <person name="Weinstock G.M."/>
            <person name="Rosenthal A."/>
            <person name="Cox E.C."/>
            <person name="Chisholm R.L."/>
            <person name="Gibbs R.A."/>
            <person name="Loomis W.F."/>
            <person name="Platzer M."/>
            <person name="Kay R.R."/>
            <person name="Williams J.G."/>
            <person name="Dear P.H."/>
            <person name="Noegel A.A."/>
            <person name="Barrell B.G."/>
            <person name="Kuspa A."/>
        </authorList>
    </citation>
    <scope>NUCLEOTIDE SEQUENCE [LARGE SCALE GENOMIC DNA]</scope>
    <source>
        <strain>AX4</strain>
    </source>
</reference>
<accession>Q86I75</accession>
<accession>Q553U8</accession>
<feature type="chain" id="PRO_0000348137" description="Putative uncharacterized protein DDB_G0275317">
    <location>
        <begin position="1"/>
        <end position="369"/>
    </location>
</feature>
<feature type="region of interest" description="Disordered" evidence="1">
    <location>
        <begin position="1"/>
        <end position="42"/>
    </location>
</feature>
<feature type="region of interest" description="Disordered" evidence="1">
    <location>
        <begin position="60"/>
        <end position="107"/>
    </location>
</feature>
<feature type="region of interest" description="Disordered" evidence="1">
    <location>
        <begin position="146"/>
        <end position="177"/>
    </location>
</feature>
<feature type="region of interest" description="Disordered" evidence="1">
    <location>
        <begin position="214"/>
        <end position="369"/>
    </location>
</feature>
<feature type="compositionally biased region" description="Polar residues" evidence="1">
    <location>
        <begin position="12"/>
        <end position="24"/>
    </location>
</feature>
<feature type="compositionally biased region" description="Low complexity" evidence="1">
    <location>
        <begin position="30"/>
        <end position="42"/>
    </location>
</feature>
<feature type="compositionally biased region" description="Low complexity" evidence="1">
    <location>
        <begin position="70"/>
        <end position="86"/>
    </location>
</feature>
<feature type="compositionally biased region" description="Polar residues" evidence="1">
    <location>
        <begin position="87"/>
        <end position="101"/>
    </location>
</feature>
<feature type="compositionally biased region" description="Acidic residues" evidence="1">
    <location>
        <begin position="155"/>
        <end position="169"/>
    </location>
</feature>
<feature type="compositionally biased region" description="Low complexity" evidence="1">
    <location>
        <begin position="219"/>
        <end position="324"/>
    </location>
</feature>
<dbReference type="EMBL" id="AAFI02000013">
    <property type="protein sequence ID" value="EAL69939.1"/>
    <property type="molecule type" value="Genomic_DNA"/>
</dbReference>
<dbReference type="RefSeq" id="XP_643863.1">
    <property type="nucleotide sequence ID" value="XM_638771.1"/>
</dbReference>
<dbReference type="FunCoup" id="Q86I75">
    <property type="interactions" value="131"/>
</dbReference>
<dbReference type="PaxDb" id="44689-DDB0217642"/>
<dbReference type="EnsemblProtists" id="EAL69939">
    <property type="protein sequence ID" value="EAL69939"/>
    <property type="gene ID" value="DDB_G0275317"/>
</dbReference>
<dbReference type="GeneID" id="8619914"/>
<dbReference type="KEGG" id="ddi:DDB_G0275317"/>
<dbReference type="dictyBase" id="DDB_G0275317"/>
<dbReference type="VEuPathDB" id="AmoebaDB:DDB_G0275317"/>
<dbReference type="eggNOG" id="ENOG502RSR8">
    <property type="taxonomic scope" value="Eukaryota"/>
</dbReference>
<dbReference type="HOGENOM" id="CLU_751056_0_0_1"/>
<dbReference type="InParanoid" id="Q86I75"/>
<dbReference type="OMA" id="HKFIPPH"/>
<dbReference type="PRO" id="PR:Q86I75"/>
<dbReference type="Proteomes" id="UP000002195">
    <property type="component" value="Chromosome 2"/>
</dbReference>
<organism>
    <name type="scientific">Dictyostelium discoideum</name>
    <name type="common">Social amoeba</name>
    <dbReference type="NCBI Taxonomy" id="44689"/>
    <lineage>
        <taxon>Eukaryota</taxon>
        <taxon>Amoebozoa</taxon>
        <taxon>Evosea</taxon>
        <taxon>Eumycetozoa</taxon>
        <taxon>Dictyostelia</taxon>
        <taxon>Dictyosteliales</taxon>
        <taxon>Dictyosteliaceae</taxon>
        <taxon>Dictyostelium</taxon>
    </lineage>
</organism>
<gene>
    <name type="ORF">DDB_G0275317</name>
</gene>
<keyword id="KW-1185">Reference proteome</keyword>
<sequence length="369" mass="40498">MRAALEEYNQKVGPNNNNQSNTINLPPVGSNSNNINDNNNNSIQRKRGATVIGTREFHVPSDLKNHHNPYHSNYNNNNNNNNNSSSAITSGTVAPSSSMNNHQKEDDSYTSLKMRYLRSLNISIKQEAPTKDTNVSASAPIPIPIALSMGRGDLDSESDISEKEDDNDGSFDGNSSGNSFLKHNTIANSYLSGNQFKNNLNSYAGNGINSMNSLSSHFNNNNNSSNNNNNNNPNNNNNNNNNNNNNNNNNNNNNNNNNNNNNNNNNNNPNNNKNNNNNNGSNIINNSSNISKNNGFIMKSNSSNNIDNNNNNNNNNNNNNSNIYNKEDDEEQFDLDTSTTPPRKDSKGKGKHKFIPPHELLGAAGGDDD</sequence>
<proteinExistence type="predicted"/>